<reference key="1">
    <citation type="submission" date="2007-11" db="EMBL/GenBank/DDBJ databases">
        <title>Complete sequence of Petroga mobilis SJ95.</title>
        <authorList>
            <consortium name="US DOE Joint Genome Institute"/>
            <person name="Copeland A."/>
            <person name="Lucas S."/>
            <person name="Lapidus A."/>
            <person name="Barry K."/>
            <person name="Glavina del Rio T."/>
            <person name="Dalin E."/>
            <person name="Tice H."/>
            <person name="Pitluck S."/>
            <person name="Meincke L."/>
            <person name="Brettin T."/>
            <person name="Bruce D."/>
            <person name="Detter J.C."/>
            <person name="Han C."/>
            <person name="Kuske C.R."/>
            <person name="Schmutz J."/>
            <person name="Larimer F."/>
            <person name="Land M."/>
            <person name="Hauser L."/>
            <person name="Kyrpides N."/>
            <person name="Mikhailova N."/>
            <person name="Noll K."/>
            <person name="Richardson P."/>
        </authorList>
    </citation>
    <scope>NUCLEOTIDE SEQUENCE [LARGE SCALE GENOMIC DNA]</scope>
    <source>
        <strain>DSM 10674 / SJ95</strain>
    </source>
</reference>
<feature type="chain" id="PRO_1000076105" description="Elongation factor Tu">
    <location>
        <begin position="1"/>
        <end position="399"/>
    </location>
</feature>
<feature type="domain" description="tr-type G">
    <location>
        <begin position="10"/>
        <end position="207"/>
    </location>
</feature>
<feature type="region of interest" description="G1" evidence="1">
    <location>
        <begin position="19"/>
        <end position="26"/>
    </location>
</feature>
<feature type="region of interest" description="G2" evidence="1">
    <location>
        <begin position="60"/>
        <end position="64"/>
    </location>
</feature>
<feature type="region of interest" description="G3" evidence="1">
    <location>
        <begin position="81"/>
        <end position="84"/>
    </location>
</feature>
<feature type="region of interest" description="G4" evidence="1">
    <location>
        <begin position="136"/>
        <end position="139"/>
    </location>
</feature>
<feature type="region of interest" description="G5" evidence="1">
    <location>
        <begin position="174"/>
        <end position="176"/>
    </location>
</feature>
<feature type="binding site" evidence="2">
    <location>
        <begin position="19"/>
        <end position="26"/>
    </location>
    <ligand>
        <name>GTP</name>
        <dbReference type="ChEBI" id="CHEBI:37565"/>
    </ligand>
</feature>
<feature type="binding site" evidence="2">
    <location>
        <position position="26"/>
    </location>
    <ligand>
        <name>Mg(2+)</name>
        <dbReference type="ChEBI" id="CHEBI:18420"/>
    </ligand>
</feature>
<feature type="binding site" evidence="2">
    <location>
        <begin position="81"/>
        <end position="85"/>
    </location>
    <ligand>
        <name>GTP</name>
        <dbReference type="ChEBI" id="CHEBI:37565"/>
    </ligand>
</feature>
<feature type="binding site" evidence="2">
    <location>
        <begin position="136"/>
        <end position="139"/>
    </location>
    <ligand>
        <name>GTP</name>
        <dbReference type="ChEBI" id="CHEBI:37565"/>
    </ligand>
</feature>
<comment type="function">
    <text evidence="2">GTP hydrolase that promotes the GTP-dependent binding of aminoacyl-tRNA to the A-site of ribosomes during protein biosynthesis.</text>
</comment>
<comment type="catalytic activity">
    <reaction evidence="2">
        <text>GTP + H2O = GDP + phosphate + H(+)</text>
        <dbReference type="Rhea" id="RHEA:19669"/>
        <dbReference type="ChEBI" id="CHEBI:15377"/>
        <dbReference type="ChEBI" id="CHEBI:15378"/>
        <dbReference type="ChEBI" id="CHEBI:37565"/>
        <dbReference type="ChEBI" id="CHEBI:43474"/>
        <dbReference type="ChEBI" id="CHEBI:58189"/>
        <dbReference type="EC" id="3.6.5.3"/>
    </reaction>
    <physiologicalReaction direction="left-to-right" evidence="2">
        <dbReference type="Rhea" id="RHEA:19670"/>
    </physiologicalReaction>
</comment>
<comment type="subunit">
    <text evidence="2">Monomer.</text>
</comment>
<comment type="subcellular location">
    <subcellularLocation>
        <location evidence="2">Cytoplasm</location>
    </subcellularLocation>
</comment>
<comment type="similarity">
    <text evidence="2">Belongs to the TRAFAC class translation factor GTPase superfamily. Classic translation factor GTPase family. EF-Tu/EF-1A subfamily.</text>
</comment>
<gene>
    <name evidence="2" type="primary">tuf</name>
    <name type="ordered locus">Pmob_0792</name>
</gene>
<evidence type="ECO:0000250" key="1"/>
<evidence type="ECO:0000255" key="2">
    <source>
        <dbReference type="HAMAP-Rule" id="MF_00118"/>
    </source>
</evidence>
<accession>A9BHA7</accession>
<proteinExistence type="inferred from homology"/>
<dbReference type="EC" id="3.6.5.3" evidence="2"/>
<dbReference type="EMBL" id="CP000879">
    <property type="protein sequence ID" value="ABX31516.1"/>
    <property type="molecule type" value="Genomic_DNA"/>
</dbReference>
<dbReference type="RefSeq" id="WP_012208619.1">
    <property type="nucleotide sequence ID" value="NC_010003.1"/>
</dbReference>
<dbReference type="SMR" id="A9BHA7"/>
<dbReference type="STRING" id="403833.Pmob_0792"/>
<dbReference type="KEGG" id="pmo:Pmob_0792"/>
<dbReference type="eggNOG" id="COG0050">
    <property type="taxonomic scope" value="Bacteria"/>
</dbReference>
<dbReference type="HOGENOM" id="CLU_007265_0_1_0"/>
<dbReference type="OrthoDB" id="9804504at2"/>
<dbReference type="Proteomes" id="UP000000789">
    <property type="component" value="Chromosome"/>
</dbReference>
<dbReference type="GO" id="GO:0005829">
    <property type="term" value="C:cytosol"/>
    <property type="evidence" value="ECO:0007669"/>
    <property type="project" value="TreeGrafter"/>
</dbReference>
<dbReference type="GO" id="GO:0005525">
    <property type="term" value="F:GTP binding"/>
    <property type="evidence" value="ECO:0007669"/>
    <property type="project" value="UniProtKB-UniRule"/>
</dbReference>
<dbReference type="GO" id="GO:0003924">
    <property type="term" value="F:GTPase activity"/>
    <property type="evidence" value="ECO:0007669"/>
    <property type="project" value="InterPro"/>
</dbReference>
<dbReference type="GO" id="GO:0003746">
    <property type="term" value="F:translation elongation factor activity"/>
    <property type="evidence" value="ECO:0007669"/>
    <property type="project" value="UniProtKB-UniRule"/>
</dbReference>
<dbReference type="CDD" id="cd01884">
    <property type="entry name" value="EF_Tu"/>
    <property type="match status" value="1"/>
</dbReference>
<dbReference type="CDD" id="cd03697">
    <property type="entry name" value="EFTU_II"/>
    <property type="match status" value="1"/>
</dbReference>
<dbReference type="CDD" id="cd03707">
    <property type="entry name" value="EFTU_III"/>
    <property type="match status" value="1"/>
</dbReference>
<dbReference type="FunFam" id="2.40.30.10:FF:000001">
    <property type="entry name" value="Elongation factor Tu"/>
    <property type="match status" value="1"/>
</dbReference>
<dbReference type="FunFam" id="2.40.30.10:FF:000046">
    <property type="entry name" value="Elongation factor Tu"/>
    <property type="match status" value="1"/>
</dbReference>
<dbReference type="FunFam" id="3.40.50.300:FF:000003">
    <property type="entry name" value="Elongation factor Tu"/>
    <property type="match status" value="1"/>
</dbReference>
<dbReference type="Gene3D" id="3.40.50.300">
    <property type="entry name" value="P-loop containing nucleotide triphosphate hydrolases"/>
    <property type="match status" value="1"/>
</dbReference>
<dbReference type="Gene3D" id="2.40.30.10">
    <property type="entry name" value="Translation factors"/>
    <property type="match status" value="2"/>
</dbReference>
<dbReference type="HAMAP" id="MF_00118_B">
    <property type="entry name" value="EF_Tu_B"/>
    <property type="match status" value="1"/>
</dbReference>
<dbReference type="InterPro" id="IPR041709">
    <property type="entry name" value="EF-Tu_GTP-bd"/>
</dbReference>
<dbReference type="InterPro" id="IPR050055">
    <property type="entry name" value="EF-Tu_GTPase"/>
</dbReference>
<dbReference type="InterPro" id="IPR004161">
    <property type="entry name" value="EFTu-like_2"/>
</dbReference>
<dbReference type="InterPro" id="IPR033720">
    <property type="entry name" value="EFTU_2"/>
</dbReference>
<dbReference type="InterPro" id="IPR031157">
    <property type="entry name" value="G_TR_CS"/>
</dbReference>
<dbReference type="InterPro" id="IPR027417">
    <property type="entry name" value="P-loop_NTPase"/>
</dbReference>
<dbReference type="InterPro" id="IPR005225">
    <property type="entry name" value="Small_GTP-bd"/>
</dbReference>
<dbReference type="InterPro" id="IPR000795">
    <property type="entry name" value="T_Tr_GTP-bd_dom"/>
</dbReference>
<dbReference type="InterPro" id="IPR009000">
    <property type="entry name" value="Transl_B-barrel_sf"/>
</dbReference>
<dbReference type="InterPro" id="IPR009001">
    <property type="entry name" value="Transl_elong_EF1A/Init_IF2_C"/>
</dbReference>
<dbReference type="InterPro" id="IPR004541">
    <property type="entry name" value="Transl_elong_EFTu/EF1A_bac/org"/>
</dbReference>
<dbReference type="InterPro" id="IPR004160">
    <property type="entry name" value="Transl_elong_EFTu/EF1A_C"/>
</dbReference>
<dbReference type="NCBIfam" id="TIGR00485">
    <property type="entry name" value="EF-Tu"/>
    <property type="match status" value="1"/>
</dbReference>
<dbReference type="NCBIfam" id="NF000766">
    <property type="entry name" value="PRK00049.1"/>
    <property type="match status" value="1"/>
</dbReference>
<dbReference type="NCBIfam" id="NF009372">
    <property type="entry name" value="PRK12735.1"/>
    <property type="match status" value="1"/>
</dbReference>
<dbReference type="NCBIfam" id="NF009373">
    <property type="entry name" value="PRK12736.1"/>
    <property type="match status" value="1"/>
</dbReference>
<dbReference type="NCBIfam" id="TIGR00231">
    <property type="entry name" value="small_GTP"/>
    <property type="match status" value="1"/>
</dbReference>
<dbReference type="PANTHER" id="PTHR43721:SF22">
    <property type="entry name" value="ELONGATION FACTOR TU, MITOCHONDRIAL"/>
    <property type="match status" value="1"/>
</dbReference>
<dbReference type="PANTHER" id="PTHR43721">
    <property type="entry name" value="ELONGATION FACTOR TU-RELATED"/>
    <property type="match status" value="1"/>
</dbReference>
<dbReference type="Pfam" id="PF00009">
    <property type="entry name" value="GTP_EFTU"/>
    <property type="match status" value="1"/>
</dbReference>
<dbReference type="Pfam" id="PF03144">
    <property type="entry name" value="GTP_EFTU_D2"/>
    <property type="match status" value="1"/>
</dbReference>
<dbReference type="Pfam" id="PF03143">
    <property type="entry name" value="GTP_EFTU_D3"/>
    <property type="match status" value="1"/>
</dbReference>
<dbReference type="PRINTS" id="PR00315">
    <property type="entry name" value="ELONGATNFCT"/>
</dbReference>
<dbReference type="SUPFAM" id="SSF50465">
    <property type="entry name" value="EF-Tu/eEF-1alpha/eIF2-gamma C-terminal domain"/>
    <property type="match status" value="1"/>
</dbReference>
<dbReference type="SUPFAM" id="SSF52540">
    <property type="entry name" value="P-loop containing nucleoside triphosphate hydrolases"/>
    <property type="match status" value="1"/>
</dbReference>
<dbReference type="SUPFAM" id="SSF50447">
    <property type="entry name" value="Translation proteins"/>
    <property type="match status" value="1"/>
</dbReference>
<dbReference type="PROSITE" id="PS00301">
    <property type="entry name" value="G_TR_1"/>
    <property type="match status" value="1"/>
</dbReference>
<dbReference type="PROSITE" id="PS51722">
    <property type="entry name" value="G_TR_2"/>
    <property type="match status" value="1"/>
</dbReference>
<protein>
    <recommendedName>
        <fullName evidence="2">Elongation factor Tu</fullName>
        <shortName evidence="2">EF-Tu</shortName>
        <ecNumber evidence="2">3.6.5.3</ecNumber>
    </recommendedName>
</protein>
<name>EFTU_PETMO</name>
<keyword id="KW-0963">Cytoplasm</keyword>
<keyword id="KW-0251">Elongation factor</keyword>
<keyword id="KW-0342">GTP-binding</keyword>
<keyword id="KW-0378">Hydrolase</keyword>
<keyword id="KW-0460">Magnesium</keyword>
<keyword id="KW-0479">Metal-binding</keyword>
<keyword id="KW-0547">Nucleotide-binding</keyword>
<keyword id="KW-0648">Protein biosynthesis</keyword>
<sequence length="399" mass="44023">MAKEKFVRAKTHMNVGTIGHIDHGKTTLTAAITKALSYKGGADFTPFDMIDKAPEEKARGITINVSHVEYQTDKRHYAHIDCPGHADYIKNMITGAAQMDGAILVVAATDGVMPQTREHVLLARQVNVPALVVFINKVDMVDDEELIDLVEMEVRDLLNSYEFPGDEVPVIRGSALKALEEDNPDGPWTQKIYELMDAVDSYFPDPVREIDKPFLMPIEDIFSITGRGTVVTGRIERGVVHTGDQVEIIGLSYETKKTVVTGVEMFRKILDEGEAGDNVGCLLRGIEKDEVKRGQVLAAPGSITPHKKFKAEVYVLKKEEGGRHTPFTKGYRPQFYIRTADVTGTLVEFSSGAEMVMPGDNINMTVELIYPVALEEGMRFAIREGGRTVGAGVVTEIIE</sequence>
<organism>
    <name type="scientific">Petrotoga mobilis (strain DSM 10674 / SJ95)</name>
    <dbReference type="NCBI Taxonomy" id="403833"/>
    <lineage>
        <taxon>Bacteria</taxon>
        <taxon>Thermotogati</taxon>
        <taxon>Thermotogota</taxon>
        <taxon>Thermotogae</taxon>
        <taxon>Petrotogales</taxon>
        <taxon>Petrotogaceae</taxon>
        <taxon>Petrotoga</taxon>
    </lineage>
</organism>